<proteinExistence type="inferred from homology"/>
<comment type="function">
    <text evidence="1">Component of the PAN1 actin cytoskeleton-regulatory complex required for the internalization of endosomes during actin-coupled endocytosis. The complex links the site of endocytosis to the cell membrane-associated actin cytoskeleton. Mediates uptake of external molecules and vacuolar degradation of plasma membrane proteins. Plays a role in the proper organization of the cell membrane-associated actin cytoskeleton and promotes its destabilization (By similarity).</text>
</comment>
<comment type="subunit">
    <text evidence="1">Component of the PAN1 actin cytoskeleton-regulatory complex.</text>
</comment>
<comment type="subcellular location">
    <subcellularLocation>
        <location evidence="1">Cell membrane</location>
        <topology evidence="1">Peripheral membrane protein</topology>
        <orientation evidence="1">Cytoplasmic side</orientation>
    </subcellularLocation>
    <subcellularLocation>
        <location evidence="1">Endosome membrane</location>
        <topology evidence="1">Peripheral membrane protein</topology>
        <orientation evidence="1">Cytoplasmic side</orientation>
    </subcellularLocation>
    <subcellularLocation>
        <location evidence="1">Cytoplasm</location>
        <location evidence="1">Cytoskeleton</location>
        <location evidence="1">Actin patch</location>
    </subcellularLocation>
    <text evidence="1">Cytoplasmic and cortical actin patches.</text>
</comment>
<comment type="similarity">
    <text evidence="7">Belongs to the PAN1 family.</text>
</comment>
<accession>A5DP36</accession>
<sequence length="1440" mass="155758">MYNPYQQPSYGAPQQPQQTGYGFNATGGNAMPQSQFQSTGYYQQQPTYQQPGFQPQQTGFQPQATGYSVPQTSYQTGFQVQQTGFQPQQTGFQQQSAETNTELKIPNIRLSFITASDQSKFEHLFRTAVRKGETAISGDAARDILLRSGLPPVTLAEIWSLSDTNKSGSLLFPEFALSLHLCNLALKSEPLPSVLPEKWSNEVQSFVDAISFSVPEDPSKILANTPFASLGTEEKTSWMDAPAAPSTSFQPQLTGFQPPQMPAQRTGGQITAQRTGGGSLIPLQPQQTAGLVPAGLQRQNTGYQPPQPLQSQNTGFQSSVGRQNTGYQPPLQQQGTGYQPLKQQNTGYQPPLQQQGTGYQPPLQQQGTGYQPPLQQQGTGYQPLQSQGTGFQSQGTIQPQGTGFQPQSTGFQPQPTGLSSQPTGKPGQWGFVSTPTGGIPGLSAMEQHFLPNTQLSSNNLQNAMGGSLKTNVTWAITKQEKSIYDGIFQAWDKSRQGFIDGETAIGIFGKSGLARPDLETIWNLADGDNKGKLNKDEFSVAMHLVYRRLNGFDLPLRLPPELIPPSKKHIQESMDSLKNSLRGGNNKPKRTQTSSSLYKHDDDDVGYVSTARHRKKSDSSSGSGSGTMSIEQLKKEIREKKILLDAMDSEDRDSSVLSQRDREWNEREIESLKFRILQAHNKLESSGISGSHEEKVQLLDRLRHLTQDKMPKLISNIHVVNNEICSRQMKVAKLRLQKEHPDWAPEASDADIVGTGPNGEVTDYDRKKFKSKQLLKRRMAALSGAKTGSTDTAVDDQLAKATEDAKNLGDQQRKMIEEISGSIKDLEDGCISALQSTTREDSYEKWEKGQGVSSDVAAFIRSLPKSEGSKNGRNEKTQSPYTQPTKSQSQSAQSTQSQSQSTQSVQTQPAQPATYSSYSSPEDRAAYIKAQAEKRMNERLAKLGITRRKETGSKAPEVPKEPVEAPKPQEIETPKETETQRETNTKSTSQTSKAEPQKVSVPPAIPSSSQAPAIPSPAIPPAPEDDSEDEEYAALMKQKQEMEERRLRKKKEKEERLARLKREMEEMNKEEDSDEEPVTSVPTYTNGSVKSSTQPISQSEEVPKTEEEKSGESEQTASKPEATPTEQAPKPDLVSTSAQSKANPFSKNNNPFFKPTQTPTIDPKKAAAQRDSQRGLGSDDWSDSDDNSSDDDGPNRAGAARLASMLFGGMAPPPRAPTIEKEETGSKETAEVPPPTEVAPPPVPAAPPASVPPPISAASSKETDSDDEWGTPSAEAANDHDDFDFGNNFEPSMAPSPPPVPTQHIPEPVTDVPPIPQSIPPPPQSFAATVEDAPPPPPIPSQVPPPPPPPPSLFPTESSNAPPAPPPPPPPSAPSAVPPPPPMAPAAPPSAPAPSPGGPPGGAPNIGALLGQITGGKSLKKVDDSQKRIADGATVGRVVD</sequence>
<organism>
    <name type="scientific">Meyerozyma guilliermondii (strain ATCC 6260 / CBS 566 / DSM 6381 / JCM 1539 / NBRC 10279 / NRRL Y-324)</name>
    <name type="common">Yeast</name>
    <name type="synonym">Candida guilliermondii</name>
    <dbReference type="NCBI Taxonomy" id="294746"/>
    <lineage>
        <taxon>Eukaryota</taxon>
        <taxon>Fungi</taxon>
        <taxon>Dikarya</taxon>
        <taxon>Ascomycota</taxon>
        <taxon>Saccharomycotina</taxon>
        <taxon>Pichiomycetes</taxon>
        <taxon>Debaryomycetaceae</taxon>
        <taxon>Meyerozyma</taxon>
    </lineage>
</organism>
<reference key="1">
    <citation type="journal article" date="2009" name="Nature">
        <title>Evolution of pathogenicity and sexual reproduction in eight Candida genomes.</title>
        <authorList>
            <person name="Butler G."/>
            <person name="Rasmussen M.D."/>
            <person name="Lin M.F."/>
            <person name="Santos M.A.S."/>
            <person name="Sakthikumar S."/>
            <person name="Munro C.A."/>
            <person name="Rheinbay E."/>
            <person name="Grabherr M."/>
            <person name="Forche A."/>
            <person name="Reedy J.L."/>
            <person name="Agrafioti I."/>
            <person name="Arnaud M.B."/>
            <person name="Bates S."/>
            <person name="Brown A.J.P."/>
            <person name="Brunke S."/>
            <person name="Costanzo M.C."/>
            <person name="Fitzpatrick D.A."/>
            <person name="de Groot P.W.J."/>
            <person name="Harris D."/>
            <person name="Hoyer L.L."/>
            <person name="Hube B."/>
            <person name="Klis F.M."/>
            <person name="Kodira C."/>
            <person name="Lennard N."/>
            <person name="Logue M.E."/>
            <person name="Martin R."/>
            <person name="Neiman A.M."/>
            <person name="Nikolaou E."/>
            <person name="Quail M.A."/>
            <person name="Quinn J."/>
            <person name="Santos M.C."/>
            <person name="Schmitzberger F.F."/>
            <person name="Sherlock G."/>
            <person name="Shah P."/>
            <person name="Silverstein K.A.T."/>
            <person name="Skrzypek M.S."/>
            <person name="Soll D."/>
            <person name="Staggs R."/>
            <person name="Stansfield I."/>
            <person name="Stumpf M.P.H."/>
            <person name="Sudbery P.E."/>
            <person name="Srikantha T."/>
            <person name="Zeng Q."/>
            <person name="Berman J."/>
            <person name="Berriman M."/>
            <person name="Heitman J."/>
            <person name="Gow N.A.R."/>
            <person name="Lorenz M.C."/>
            <person name="Birren B.W."/>
            <person name="Kellis M."/>
            <person name="Cuomo C.A."/>
        </authorList>
    </citation>
    <scope>NUCLEOTIDE SEQUENCE [LARGE SCALE GENOMIC DNA]</scope>
    <source>
        <strain>ATCC 6260 / CBS 566 / DSM 6381 / JCM 1539 / NBRC 10279 / NRRL Y-324</strain>
    </source>
</reference>
<feature type="chain" id="PRO_0000349482" description="Actin cytoskeleton-regulatory complex protein PAN1">
    <location>
        <begin position="1"/>
        <end position="1440"/>
    </location>
</feature>
<feature type="domain" description="EH 1" evidence="3">
    <location>
        <begin position="117"/>
        <end position="206"/>
    </location>
</feature>
<feature type="domain" description="EF-hand 1" evidence="5">
    <location>
        <begin position="150"/>
        <end position="185"/>
    </location>
</feature>
<feature type="domain" description="EH 2" evidence="3">
    <location>
        <begin position="480"/>
        <end position="569"/>
    </location>
</feature>
<feature type="domain" description="EF-hand 2" evidence="5">
    <location>
        <begin position="513"/>
        <end position="548"/>
    </location>
</feature>
<feature type="domain" description="WH2" evidence="4">
    <location>
        <begin position="1405"/>
        <end position="1422"/>
    </location>
</feature>
<feature type="region of interest" description="Disordered" evidence="6">
    <location>
        <begin position="1"/>
        <end position="67"/>
    </location>
</feature>
<feature type="region of interest" description="Disordered" evidence="6">
    <location>
        <begin position="234"/>
        <end position="285"/>
    </location>
</feature>
<feature type="region of interest" description="Disordered" evidence="6">
    <location>
        <begin position="297"/>
        <end position="428"/>
    </location>
</feature>
<feature type="region of interest" description="Disordered" evidence="6">
    <location>
        <begin position="564"/>
        <end position="629"/>
    </location>
</feature>
<feature type="region of interest" description="Disordered" evidence="6">
    <location>
        <begin position="861"/>
        <end position="1440"/>
    </location>
</feature>
<feature type="coiled-coil region" evidence="2">
    <location>
        <begin position="627"/>
        <end position="686"/>
    </location>
</feature>
<feature type="coiled-coil region" evidence="2">
    <location>
        <begin position="1024"/>
        <end position="1076"/>
    </location>
</feature>
<feature type="compositionally biased region" description="Polar residues" evidence="6">
    <location>
        <begin position="1"/>
        <end position="21"/>
    </location>
</feature>
<feature type="compositionally biased region" description="Low complexity" evidence="6">
    <location>
        <begin position="39"/>
        <end position="63"/>
    </location>
</feature>
<feature type="compositionally biased region" description="Polar residues" evidence="6">
    <location>
        <begin position="245"/>
        <end position="257"/>
    </location>
</feature>
<feature type="compositionally biased region" description="Polar residues" evidence="6">
    <location>
        <begin position="297"/>
        <end position="384"/>
    </location>
</feature>
<feature type="compositionally biased region" description="Low complexity" evidence="6">
    <location>
        <begin position="385"/>
        <end position="398"/>
    </location>
</feature>
<feature type="compositionally biased region" description="Polar residues" evidence="6">
    <location>
        <begin position="399"/>
        <end position="423"/>
    </location>
</feature>
<feature type="compositionally biased region" description="Polar residues" evidence="6">
    <location>
        <begin position="573"/>
        <end position="583"/>
    </location>
</feature>
<feature type="compositionally biased region" description="Basic and acidic residues" evidence="6">
    <location>
        <begin position="867"/>
        <end position="876"/>
    </location>
</feature>
<feature type="compositionally biased region" description="Low complexity" evidence="6">
    <location>
        <begin position="882"/>
        <end position="914"/>
    </location>
</feature>
<feature type="compositionally biased region" description="Basic and acidic residues" evidence="6">
    <location>
        <begin position="921"/>
        <end position="984"/>
    </location>
</feature>
<feature type="compositionally biased region" description="Polar residues" evidence="6">
    <location>
        <begin position="985"/>
        <end position="994"/>
    </location>
</feature>
<feature type="compositionally biased region" description="Acidic residues" evidence="6">
    <location>
        <begin position="1023"/>
        <end position="1032"/>
    </location>
</feature>
<feature type="compositionally biased region" description="Basic and acidic residues" evidence="6">
    <location>
        <begin position="1038"/>
        <end position="1067"/>
    </location>
</feature>
<feature type="compositionally biased region" description="Acidic residues" evidence="6">
    <location>
        <begin position="1068"/>
        <end position="1077"/>
    </location>
</feature>
<feature type="compositionally biased region" description="Polar residues" evidence="6">
    <location>
        <begin position="1080"/>
        <end position="1100"/>
    </location>
</feature>
<feature type="compositionally biased region" description="Basic and acidic residues" evidence="6">
    <location>
        <begin position="1101"/>
        <end position="1112"/>
    </location>
</feature>
<feature type="compositionally biased region" description="Low complexity" evidence="6">
    <location>
        <begin position="1140"/>
        <end position="1155"/>
    </location>
</feature>
<feature type="compositionally biased region" description="Acidic residues" evidence="6">
    <location>
        <begin position="1180"/>
        <end position="1192"/>
    </location>
</feature>
<feature type="compositionally biased region" description="Basic and acidic residues" evidence="6">
    <location>
        <begin position="1218"/>
        <end position="1230"/>
    </location>
</feature>
<feature type="compositionally biased region" description="Pro residues" evidence="6">
    <location>
        <begin position="1232"/>
        <end position="1255"/>
    </location>
</feature>
<feature type="compositionally biased region" description="Pro residues" evidence="6">
    <location>
        <begin position="1311"/>
        <end position="1324"/>
    </location>
</feature>
<feature type="compositionally biased region" description="Pro residues" evidence="6">
    <location>
        <begin position="1333"/>
        <end position="1353"/>
    </location>
</feature>
<feature type="compositionally biased region" description="Pro residues" evidence="6">
    <location>
        <begin position="1362"/>
        <end position="1402"/>
    </location>
</feature>
<feature type="compositionally biased region" description="Basic and acidic residues" evidence="6">
    <location>
        <begin position="1420"/>
        <end position="1430"/>
    </location>
</feature>
<dbReference type="EMBL" id="CH408160">
    <property type="protein sequence ID" value="EDK40939.2"/>
    <property type="molecule type" value="Genomic_DNA"/>
</dbReference>
<dbReference type="RefSeq" id="XP_001483082.1">
    <property type="nucleotide sequence ID" value="XM_001483032.1"/>
</dbReference>
<dbReference type="SMR" id="A5DP36"/>
<dbReference type="FunCoup" id="A5DP36">
    <property type="interactions" value="70"/>
</dbReference>
<dbReference type="STRING" id="294746.A5DP36"/>
<dbReference type="GeneID" id="5124796"/>
<dbReference type="KEGG" id="pgu:PGUG_05037"/>
<dbReference type="VEuPathDB" id="FungiDB:PGUG_05037"/>
<dbReference type="eggNOG" id="KOG0998">
    <property type="taxonomic scope" value="Eukaryota"/>
</dbReference>
<dbReference type="HOGENOM" id="CLU_001619_0_0_1"/>
<dbReference type="InParanoid" id="A5DP36"/>
<dbReference type="OMA" id="GMPGQWG"/>
<dbReference type="OrthoDB" id="2015333at2759"/>
<dbReference type="Proteomes" id="UP000001997">
    <property type="component" value="Unassembled WGS sequence"/>
</dbReference>
<dbReference type="GO" id="GO:0030479">
    <property type="term" value="C:actin cortical patch"/>
    <property type="evidence" value="ECO:0007669"/>
    <property type="project" value="UniProtKB-SubCell"/>
</dbReference>
<dbReference type="GO" id="GO:0010008">
    <property type="term" value="C:endosome membrane"/>
    <property type="evidence" value="ECO:0007669"/>
    <property type="project" value="UniProtKB-SubCell"/>
</dbReference>
<dbReference type="GO" id="GO:0005886">
    <property type="term" value="C:plasma membrane"/>
    <property type="evidence" value="ECO:0007669"/>
    <property type="project" value="UniProtKB-SubCell"/>
</dbReference>
<dbReference type="GO" id="GO:0003779">
    <property type="term" value="F:actin binding"/>
    <property type="evidence" value="ECO:0007669"/>
    <property type="project" value="UniProtKB-KW"/>
</dbReference>
<dbReference type="GO" id="GO:0005509">
    <property type="term" value="F:calcium ion binding"/>
    <property type="evidence" value="ECO:0007669"/>
    <property type="project" value="InterPro"/>
</dbReference>
<dbReference type="GO" id="GO:0006897">
    <property type="term" value="P:endocytosis"/>
    <property type="evidence" value="ECO:0007669"/>
    <property type="project" value="UniProtKB-KW"/>
</dbReference>
<dbReference type="GO" id="GO:0016197">
    <property type="term" value="P:endosomal transport"/>
    <property type="evidence" value="ECO:0007669"/>
    <property type="project" value="TreeGrafter"/>
</dbReference>
<dbReference type="CDD" id="cd00052">
    <property type="entry name" value="EH"/>
    <property type="match status" value="2"/>
</dbReference>
<dbReference type="FunFam" id="1.10.238.10:FF:000349">
    <property type="entry name" value="Actin cytoskeleton-regulatory complex protein PAN1"/>
    <property type="match status" value="1"/>
</dbReference>
<dbReference type="Gene3D" id="1.10.238.10">
    <property type="entry name" value="EF-hand"/>
    <property type="match status" value="2"/>
</dbReference>
<dbReference type="InterPro" id="IPR013182">
    <property type="entry name" value="DUF1720"/>
</dbReference>
<dbReference type="InterPro" id="IPR011992">
    <property type="entry name" value="EF-hand-dom_pair"/>
</dbReference>
<dbReference type="InterPro" id="IPR002048">
    <property type="entry name" value="EF_hand_dom"/>
</dbReference>
<dbReference type="InterPro" id="IPR000261">
    <property type="entry name" value="EH_dom"/>
</dbReference>
<dbReference type="InterPro" id="IPR003124">
    <property type="entry name" value="WH2_dom"/>
</dbReference>
<dbReference type="PANTHER" id="PTHR11216">
    <property type="entry name" value="EH DOMAIN"/>
    <property type="match status" value="1"/>
</dbReference>
<dbReference type="Pfam" id="PF08226">
    <property type="entry name" value="DUF1720"/>
    <property type="match status" value="3"/>
</dbReference>
<dbReference type="Pfam" id="PF12763">
    <property type="entry name" value="EH"/>
    <property type="match status" value="2"/>
</dbReference>
<dbReference type="SMART" id="SM00054">
    <property type="entry name" value="EFh"/>
    <property type="match status" value="3"/>
</dbReference>
<dbReference type="SMART" id="SM00027">
    <property type="entry name" value="EH"/>
    <property type="match status" value="2"/>
</dbReference>
<dbReference type="SUPFAM" id="SSF47473">
    <property type="entry name" value="EF-hand"/>
    <property type="match status" value="2"/>
</dbReference>
<dbReference type="PROSITE" id="PS50222">
    <property type="entry name" value="EF_HAND_2"/>
    <property type="match status" value="2"/>
</dbReference>
<dbReference type="PROSITE" id="PS50031">
    <property type="entry name" value="EH"/>
    <property type="match status" value="2"/>
</dbReference>
<dbReference type="PROSITE" id="PS51082">
    <property type="entry name" value="WH2"/>
    <property type="match status" value="1"/>
</dbReference>
<keyword id="KW-0009">Actin-binding</keyword>
<keyword id="KW-1003">Cell membrane</keyword>
<keyword id="KW-0175">Coiled coil</keyword>
<keyword id="KW-0963">Cytoplasm</keyword>
<keyword id="KW-0206">Cytoskeleton</keyword>
<keyword id="KW-0254">Endocytosis</keyword>
<keyword id="KW-0967">Endosome</keyword>
<keyword id="KW-0472">Membrane</keyword>
<keyword id="KW-1185">Reference proteome</keyword>
<keyword id="KW-0677">Repeat</keyword>
<gene>
    <name type="primary">PAN1</name>
    <name type="ORF">PGUG_05037</name>
</gene>
<protein>
    <recommendedName>
        <fullName>Actin cytoskeleton-regulatory complex protein PAN1</fullName>
    </recommendedName>
</protein>
<evidence type="ECO:0000250" key="1"/>
<evidence type="ECO:0000255" key="2"/>
<evidence type="ECO:0000255" key="3">
    <source>
        <dbReference type="PROSITE-ProRule" id="PRU00077"/>
    </source>
</evidence>
<evidence type="ECO:0000255" key="4">
    <source>
        <dbReference type="PROSITE-ProRule" id="PRU00406"/>
    </source>
</evidence>
<evidence type="ECO:0000255" key="5">
    <source>
        <dbReference type="PROSITE-ProRule" id="PRU00448"/>
    </source>
</evidence>
<evidence type="ECO:0000256" key="6">
    <source>
        <dbReference type="SAM" id="MobiDB-lite"/>
    </source>
</evidence>
<evidence type="ECO:0000305" key="7"/>
<name>PAN1_PICGU</name>